<feature type="chain" id="PRO_0000271042" description="Zinc finger protein 536">
    <location>
        <begin position="1"/>
        <end position="1302"/>
    </location>
</feature>
<feature type="zinc finger region" description="C2H2-type 1" evidence="2">
    <location>
        <begin position="130"/>
        <end position="152"/>
    </location>
</feature>
<feature type="zinc finger region" description="C2H2-type 2" evidence="2">
    <location>
        <begin position="158"/>
        <end position="180"/>
    </location>
</feature>
<feature type="zinc finger region" description="C2H2-type 3" evidence="2">
    <location>
        <begin position="274"/>
        <end position="297"/>
    </location>
</feature>
<feature type="zinc finger region" description="C2H2-type 4" evidence="2">
    <location>
        <begin position="300"/>
        <end position="323"/>
    </location>
</feature>
<feature type="zinc finger region" description="C2H2-type 5" evidence="2">
    <location>
        <begin position="345"/>
        <end position="367"/>
    </location>
</feature>
<feature type="zinc finger region" description="C2H2-type 6" evidence="2">
    <location>
        <begin position="373"/>
        <end position="395"/>
    </location>
</feature>
<feature type="zinc finger region" description="C2H2-type 7" evidence="2">
    <location>
        <begin position="631"/>
        <end position="653"/>
    </location>
</feature>
<feature type="zinc finger region" description="C2H2-type 8" evidence="2">
    <location>
        <begin position="753"/>
        <end position="775"/>
    </location>
</feature>
<feature type="zinc finger region" description="C2H2-type 9" evidence="2">
    <location>
        <begin position="781"/>
        <end position="803"/>
    </location>
</feature>
<feature type="region of interest" description="Disordered" evidence="3">
    <location>
        <begin position="1"/>
        <end position="26"/>
    </location>
</feature>
<feature type="region of interest" description="Disordered" evidence="3">
    <location>
        <begin position="650"/>
        <end position="736"/>
    </location>
</feature>
<feature type="region of interest" description="Disordered" evidence="3">
    <location>
        <begin position="804"/>
        <end position="832"/>
    </location>
</feature>
<feature type="region of interest" description="Disordered" evidence="3">
    <location>
        <begin position="855"/>
        <end position="897"/>
    </location>
</feature>
<feature type="region of interest" description="Disordered" evidence="3">
    <location>
        <begin position="935"/>
        <end position="988"/>
    </location>
</feature>
<feature type="region of interest" description="Disordered" evidence="3">
    <location>
        <begin position="1133"/>
        <end position="1261"/>
    </location>
</feature>
<feature type="compositionally biased region" description="Basic and acidic residues" evidence="3">
    <location>
        <begin position="657"/>
        <end position="676"/>
    </location>
</feature>
<feature type="compositionally biased region" description="Polar residues" evidence="3">
    <location>
        <begin position="677"/>
        <end position="698"/>
    </location>
</feature>
<feature type="compositionally biased region" description="Polar residues" evidence="3">
    <location>
        <begin position="869"/>
        <end position="883"/>
    </location>
</feature>
<feature type="compositionally biased region" description="Basic and acidic residues" evidence="3">
    <location>
        <begin position="935"/>
        <end position="973"/>
    </location>
</feature>
<feature type="compositionally biased region" description="Acidic residues" evidence="3">
    <location>
        <begin position="1161"/>
        <end position="1171"/>
    </location>
</feature>
<feature type="compositionally biased region" description="Acidic residues" evidence="3">
    <location>
        <begin position="1179"/>
        <end position="1188"/>
    </location>
</feature>
<feature type="compositionally biased region" description="Low complexity" evidence="3">
    <location>
        <begin position="1198"/>
        <end position="1212"/>
    </location>
</feature>
<feature type="modified residue" description="Phosphoserine" evidence="1">
    <location>
        <position position="828"/>
    </location>
</feature>
<feature type="modified residue" description="Phosphoserine" evidence="1">
    <location>
        <position position="829"/>
    </location>
</feature>
<feature type="sequence conflict" description="In Ref. 1; BAC65552." evidence="5" ref="1">
    <original>N</original>
    <variation>Y</variation>
    <location>
        <position position="590"/>
    </location>
</feature>
<feature type="sequence conflict" description="In Ref. 1; BAC65552." evidence="5" ref="1">
    <original>Y</original>
    <variation>F</variation>
    <location>
        <position position="899"/>
    </location>
</feature>
<feature type="sequence conflict" description="In Ref. 1; BAC65552." evidence="5" ref="1">
    <original>T</original>
    <variation>A</variation>
    <location>
        <position position="1036"/>
    </location>
</feature>
<feature type="sequence conflict" description="In Ref. 1; BAC65552." evidence="5" ref="1">
    <original>G</original>
    <variation>S</variation>
    <location>
        <position position="1207"/>
    </location>
</feature>
<gene>
    <name type="primary">Znf536</name>
    <name type="synonym">Kiaa0390</name>
    <name type="synonym">Zfp536</name>
</gene>
<evidence type="ECO:0000250" key="1">
    <source>
        <dbReference type="UniProtKB" id="O15090"/>
    </source>
</evidence>
<evidence type="ECO:0000255" key="2">
    <source>
        <dbReference type="PROSITE-ProRule" id="PRU00042"/>
    </source>
</evidence>
<evidence type="ECO:0000256" key="3">
    <source>
        <dbReference type="SAM" id="MobiDB-lite"/>
    </source>
</evidence>
<evidence type="ECO:0000269" key="4">
    <source>
    </source>
</evidence>
<evidence type="ECO:0000305" key="5"/>
<proteinExistence type="evidence at protein level"/>
<sequence>MEEASLCLGVSSTAPEAEPHLSGPVLNGQYAMSQKLHQITSQLSHAFPELHPRPNPEEKTPAALEEKAHVPMSGQSMGSQMALLANQLGRDVDNSLNGRVDLQQFLNGQNLGIMSQMSDIEDDARKNRKYPCPLCGKRFRFNSILSLHMRTHTGEKPFKCPYCDHRAAQKGNLKIHLRTHKLGNLGKGRGRVREENRLLHELEERAILRDKQMKGSLLQPRSDLKPLAHAQQAPLATCNLALPPNHSVPDVAHPAPSPKPANLQEDSVTPAAGFRCTFCKGKFKKREELDRHIRILHKPYKCTLCDFAASQEEELISHVEKAHITAESAQGQGPNGGGEQSANEFRCEVCGQVFSQAWFLKGHMRKHKDSFEHCCQICGRRFKEPWFLKNHMKVHLNKLSVKNKSPTEPEVAVPMGGLSQEAHANLYSRYLSCLQSGFMAPDKASLNEPSQLYGKGELPAKEKEVLGKLLSPISSMAHSVPEGDKHSLLGCLNLVPPLKSSCIERLQAAAKAAEMDPVNSYQAWQLMARGMAMEHGFLSKEHQLSRNHEDPLANTGVLFDKEKREYVLVGADGSKQKMPADLVHSTKVGNQRDLPNKLDPLEGSREFLSHGLNQTLDYNLQGPGNMKEKPTECPDCGRVFRTYHQVVVHSRVHKRDRKSDEDALHVGVGLEERRGSGSDQESQSVSRSTTPGSSNVTEESGAGGGLSQTGSAQEDSPHPSSPSSSDIGEEAGRAGGVQQQALLRDRNLGSAMKDCPYCGKTFRTSHHLKVHLRIHTGEKPYKCPHCDYAGTQSASLKYHLERHHRERQNGAGPLSGQPPNQEHKDETSSKAPMFIRPDILRGAFKGLPGIDFRGGPASQQWTAGMLSSGDHSGQATGMPSELSSDALKGSDLPSKSSHYSEIGRAYQNIVSNGVNFQGSLQAFMDSFVLSSLKKKDTKDKVPSDAHPMKAHTAEGGEEKASMKPSQRKSEKSQYEPLDLSVRPDAPTLPGSSVTVQDSIAWHGCLFCAFTTSSMELMALHLQANHLGRAKRKDHPTGVTVNCKEQGREASKVSVLPSLQSNKEMALPSAVGVLDSAPEKLAQGPAKETLGDPKSGQWPNHMDPAFCTFPSDFYKQFGVYPAMVGSGAPGSCLNKNTEGKTHPDDDAPILIPETTNKNTTDDLSDIASSEDMDSSKGENNEDEELDTEPEMTSKPLSALSKDGSSEGGDSLLSPGAPQPIQGLVSPLAQAAEEQWHSPGLLPAQDPSAGLPKPERGPPGLEKPMSMLSVLRAYSADGLAAFNGLASSTANSGCIKRPDLCGKF</sequence>
<comment type="function">
    <text evidence="1 4">Transcriptional repressor that negatively regulates neuron differentiation by repressing retinoic acid-induced gene transcription (PubMed:19398580). Binds and interrupts RARA from binding to retinoic acid response elements (RARE) composed of tandem 5'-AGGTCA-3' sites known as DR1-DR5 (PubMed:19398580). Recognizes and binds 2 copies of the core DNA sequence 5'-CCCCCA-3' (By similarity).</text>
</comment>
<comment type="subcellular location">
    <subcellularLocation>
        <location evidence="4">Nucleus</location>
    </subcellularLocation>
</comment>
<comment type="tissue specificity">
    <text evidence="4">Expressed predominantly in the brain, while a weak signal is also detected in the heart and testis (PubMed:19398580). Expression is abundant in neuronal cells of the cerebral cortex, hippocampus and hypothalamic area (at protein level) (PubMed:19398580).</text>
</comment>
<comment type="developmental stage">
    <text evidence="4">From 9.5 dpc to 12.5 dpc, expressed in the developing central nervous system, dorsal root ganglia, eye vesicles and limbs. At 9.5 dpc, expressed in the developing forebrain, midbrain, hindbrain neural folds and spinal cord. When the embryo developed to 10.5 dpc, expressed in the telencephalic vesicles, midbrain, hindbrain, and spinal cord and is detectable in the dorsal root ganglia region and somites. Similar expression patterns at 11.5 dpc and 12.5 dpc, with significant expression in the telencephalic vesicles, midbrain, hindbrain and spinal cord.</text>
</comment>
<comment type="similarity">
    <text evidence="5">Belongs to the krueppel C2H2-type zinc-finger protein family.</text>
</comment>
<comment type="sequence caution" evidence="5">
    <conflict type="erroneous initiation">
        <sequence resource="EMBL-CDS" id="BAC65552"/>
    </conflict>
    <text>Extended N-terminus.</text>
</comment>
<protein>
    <recommendedName>
        <fullName>Zinc finger protein 536</fullName>
    </recommendedName>
</protein>
<organism>
    <name type="scientific">Mus musculus</name>
    <name type="common">Mouse</name>
    <dbReference type="NCBI Taxonomy" id="10090"/>
    <lineage>
        <taxon>Eukaryota</taxon>
        <taxon>Metazoa</taxon>
        <taxon>Chordata</taxon>
        <taxon>Craniata</taxon>
        <taxon>Vertebrata</taxon>
        <taxon>Euteleostomi</taxon>
        <taxon>Mammalia</taxon>
        <taxon>Eutheria</taxon>
        <taxon>Euarchontoglires</taxon>
        <taxon>Glires</taxon>
        <taxon>Rodentia</taxon>
        <taxon>Myomorpha</taxon>
        <taxon>Muroidea</taxon>
        <taxon>Muridae</taxon>
        <taxon>Murinae</taxon>
        <taxon>Mus</taxon>
        <taxon>Mus</taxon>
    </lineage>
</organism>
<keyword id="KW-0238">DNA-binding</keyword>
<keyword id="KW-0479">Metal-binding</keyword>
<keyword id="KW-0539">Nucleus</keyword>
<keyword id="KW-0597">Phosphoprotein</keyword>
<keyword id="KW-1185">Reference proteome</keyword>
<keyword id="KW-0677">Repeat</keyword>
<keyword id="KW-0804">Transcription</keyword>
<keyword id="KW-0805">Transcription regulation</keyword>
<keyword id="KW-0862">Zinc</keyword>
<keyword id="KW-0863">Zinc-finger</keyword>
<dbReference type="EMBL" id="AK122270">
    <property type="protein sequence ID" value="BAC65552.1"/>
    <property type="status" value="ALT_INIT"/>
    <property type="molecule type" value="mRNA"/>
</dbReference>
<dbReference type="EMBL" id="AK030633">
    <property type="protein sequence ID" value="BAC27055.1"/>
    <property type="molecule type" value="mRNA"/>
</dbReference>
<dbReference type="EMBL" id="AK034508">
    <property type="protein sequence ID" value="BAC28735.1"/>
    <property type="molecule type" value="mRNA"/>
</dbReference>
<dbReference type="EMBL" id="BC033594">
    <property type="protein sequence ID" value="AAH33594.1"/>
    <property type="molecule type" value="mRNA"/>
</dbReference>
<dbReference type="CCDS" id="CCDS21156.1"/>
<dbReference type="RefSeq" id="NP_759017.1">
    <property type="nucleotide sequence ID" value="NM_172385.2"/>
</dbReference>
<dbReference type="BioGRID" id="232588">
    <property type="interactions" value="2"/>
</dbReference>
<dbReference type="FunCoup" id="Q8K083">
    <property type="interactions" value="1330"/>
</dbReference>
<dbReference type="STRING" id="10090.ENSMUSP00000058468"/>
<dbReference type="GlyGen" id="Q8K083">
    <property type="glycosylation" value="1 site, 1 O-linked glycan (1 site)"/>
</dbReference>
<dbReference type="iPTMnet" id="Q8K083"/>
<dbReference type="PhosphoSitePlus" id="Q8K083"/>
<dbReference type="jPOST" id="Q8K083"/>
<dbReference type="PaxDb" id="10090-ENSMUSP00000058468"/>
<dbReference type="PeptideAtlas" id="Q8K083"/>
<dbReference type="ProteomicsDB" id="275085"/>
<dbReference type="Antibodypedia" id="15575">
    <property type="antibodies" value="84 antibodies from 20 providers"/>
</dbReference>
<dbReference type="Ensembl" id="ENSMUST00000056338.13">
    <property type="protein sequence ID" value="ENSMUSP00000058468.7"/>
    <property type="gene ID" value="ENSMUSG00000043456.18"/>
</dbReference>
<dbReference type="Ensembl" id="ENSMUST00000175941.8">
    <property type="protein sequence ID" value="ENSMUSP00000134778.2"/>
    <property type="gene ID" value="ENSMUSG00000043456.18"/>
</dbReference>
<dbReference type="Ensembl" id="ENSMUST00000176114.8">
    <property type="protein sequence ID" value="ENSMUSP00000135681.2"/>
    <property type="gene ID" value="ENSMUSG00000043456.18"/>
</dbReference>
<dbReference type="Ensembl" id="ENSMUST00000176205.8">
    <property type="protein sequence ID" value="ENSMUSP00000135068.2"/>
    <property type="gene ID" value="ENSMUSG00000043456.18"/>
</dbReference>
<dbReference type="GeneID" id="243937"/>
<dbReference type="KEGG" id="mmu:243937"/>
<dbReference type="UCSC" id="uc009gkk.1">
    <property type="organism name" value="mouse"/>
</dbReference>
<dbReference type="AGR" id="MGI:1926102"/>
<dbReference type="CTD" id="243937"/>
<dbReference type="MGI" id="MGI:1926102">
    <property type="gene designation" value="Zfp536"/>
</dbReference>
<dbReference type="VEuPathDB" id="HostDB:ENSMUSG00000043456"/>
<dbReference type="eggNOG" id="KOG1721">
    <property type="taxonomic scope" value="Eukaryota"/>
</dbReference>
<dbReference type="GeneTree" id="ENSGT00940000156397"/>
<dbReference type="HOGENOM" id="CLU_008125_0_0_1"/>
<dbReference type="InParanoid" id="Q8K083"/>
<dbReference type="OMA" id="EKMTQGH"/>
<dbReference type="OrthoDB" id="6077919at2759"/>
<dbReference type="PhylomeDB" id="Q8K083"/>
<dbReference type="TreeFam" id="TF332241"/>
<dbReference type="BioGRID-ORCS" id="243937">
    <property type="hits" value="4 hits in 79 CRISPR screens"/>
</dbReference>
<dbReference type="ChiTaRS" id="Zfp536">
    <property type="organism name" value="mouse"/>
</dbReference>
<dbReference type="PRO" id="PR:Q8K083"/>
<dbReference type="Proteomes" id="UP000000589">
    <property type="component" value="Chromosome 7"/>
</dbReference>
<dbReference type="RNAct" id="Q8K083">
    <property type="molecule type" value="protein"/>
</dbReference>
<dbReference type="Bgee" id="ENSMUSG00000043456">
    <property type="expression patterns" value="Expressed in epithelium of lens and 182 other cell types or tissues"/>
</dbReference>
<dbReference type="ExpressionAtlas" id="Q8K083">
    <property type="expression patterns" value="baseline and differential"/>
</dbReference>
<dbReference type="GO" id="GO:0005634">
    <property type="term" value="C:nucleus"/>
    <property type="evidence" value="ECO:0000305"/>
    <property type="project" value="MGI"/>
</dbReference>
<dbReference type="GO" id="GO:0001227">
    <property type="term" value="F:DNA-binding transcription repressor activity, RNA polymerase II-specific"/>
    <property type="evidence" value="ECO:0007669"/>
    <property type="project" value="Ensembl"/>
</dbReference>
<dbReference type="GO" id="GO:0044323">
    <property type="term" value="F:retinoic acid-responsive element binding"/>
    <property type="evidence" value="ECO:0000314"/>
    <property type="project" value="MGI"/>
</dbReference>
<dbReference type="GO" id="GO:0008270">
    <property type="term" value="F:zinc ion binding"/>
    <property type="evidence" value="ECO:0007669"/>
    <property type="project" value="UniProtKB-KW"/>
</dbReference>
<dbReference type="GO" id="GO:0045665">
    <property type="term" value="P:negative regulation of neuron differentiation"/>
    <property type="evidence" value="ECO:0000314"/>
    <property type="project" value="MGI"/>
</dbReference>
<dbReference type="GO" id="GO:0048387">
    <property type="term" value="P:negative regulation of retinoic acid receptor signaling pathway"/>
    <property type="evidence" value="ECO:0000314"/>
    <property type="project" value="MGI"/>
</dbReference>
<dbReference type="FunFam" id="3.30.160.60:FF:000075">
    <property type="entry name" value="Putative zinc finger protein 536"/>
    <property type="match status" value="2"/>
</dbReference>
<dbReference type="FunFam" id="3.30.160.60:FF:000694">
    <property type="entry name" value="zinc finger protein 516"/>
    <property type="match status" value="1"/>
</dbReference>
<dbReference type="FunFam" id="3.30.160.60:FF:000591">
    <property type="entry name" value="Zinc finger protein 536"/>
    <property type="match status" value="1"/>
</dbReference>
<dbReference type="FunFam" id="3.30.160.60:FF:000615">
    <property type="entry name" value="Zinc finger protein 536"/>
    <property type="match status" value="1"/>
</dbReference>
<dbReference type="FunFam" id="3.30.160.60:FF:000625">
    <property type="entry name" value="Zinc finger protein 536"/>
    <property type="match status" value="1"/>
</dbReference>
<dbReference type="Gene3D" id="3.30.160.60">
    <property type="entry name" value="Classic Zinc Finger"/>
    <property type="match status" value="6"/>
</dbReference>
<dbReference type="InterPro" id="IPR051967">
    <property type="entry name" value="Krueppel_C2H2-ZF"/>
</dbReference>
<dbReference type="InterPro" id="IPR036236">
    <property type="entry name" value="Znf_C2H2_sf"/>
</dbReference>
<dbReference type="InterPro" id="IPR013087">
    <property type="entry name" value="Znf_C2H2_type"/>
</dbReference>
<dbReference type="PANTHER" id="PTHR45925">
    <property type="entry name" value="ZINC FINGER PROTEIN"/>
    <property type="match status" value="1"/>
</dbReference>
<dbReference type="PANTHER" id="PTHR45925:SF2">
    <property type="entry name" value="ZINC FINGER PROTEIN 536"/>
    <property type="match status" value="1"/>
</dbReference>
<dbReference type="Pfam" id="PF00096">
    <property type="entry name" value="zf-C2H2"/>
    <property type="match status" value="5"/>
</dbReference>
<dbReference type="Pfam" id="PF16606">
    <property type="entry name" value="zf-C2H2_assoc"/>
    <property type="match status" value="1"/>
</dbReference>
<dbReference type="Pfam" id="PF13909">
    <property type="entry name" value="zf-H2C2_5"/>
    <property type="match status" value="1"/>
</dbReference>
<dbReference type="SMART" id="SM00355">
    <property type="entry name" value="ZnF_C2H2"/>
    <property type="match status" value="10"/>
</dbReference>
<dbReference type="SUPFAM" id="SSF57667">
    <property type="entry name" value="beta-beta-alpha zinc fingers"/>
    <property type="match status" value="5"/>
</dbReference>
<dbReference type="PROSITE" id="PS00028">
    <property type="entry name" value="ZINC_FINGER_C2H2_1"/>
    <property type="match status" value="6"/>
</dbReference>
<dbReference type="PROSITE" id="PS50157">
    <property type="entry name" value="ZINC_FINGER_C2H2_2"/>
    <property type="match status" value="8"/>
</dbReference>
<reference key="1">
    <citation type="journal article" date="2003" name="DNA Res.">
        <title>Prediction of the coding sequences of mouse homologues of KIAA gene: II. The complete nucleotide sequences of 400 mouse KIAA-homologous cDNAs identified by screening of terminal sequences of cDNA clones randomly sampled from size-fractionated libraries.</title>
        <authorList>
            <person name="Okazaki N."/>
            <person name="Kikuno R."/>
            <person name="Ohara R."/>
            <person name="Inamoto S."/>
            <person name="Aizawa H."/>
            <person name="Yuasa S."/>
            <person name="Nakajima D."/>
            <person name="Nagase T."/>
            <person name="Ohara O."/>
            <person name="Koga H."/>
        </authorList>
    </citation>
    <scope>NUCLEOTIDE SEQUENCE [LARGE SCALE MRNA]</scope>
    <source>
        <tissue>Brain</tissue>
    </source>
</reference>
<reference key="2">
    <citation type="journal article" date="2005" name="Science">
        <title>The transcriptional landscape of the mammalian genome.</title>
        <authorList>
            <person name="Carninci P."/>
            <person name="Kasukawa T."/>
            <person name="Katayama S."/>
            <person name="Gough J."/>
            <person name="Frith M.C."/>
            <person name="Maeda N."/>
            <person name="Oyama R."/>
            <person name="Ravasi T."/>
            <person name="Lenhard B."/>
            <person name="Wells C."/>
            <person name="Kodzius R."/>
            <person name="Shimokawa K."/>
            <person name="Bajic V.B."/>
            <person name="Brenner S.E."/>
            <person name="Batalov S."/>
            <person name="Forrest A.R."/>
            <person name="Zavolan M."/>
            <person name="Davis M.J."/>
            <person name="Wilming L.G."/>
            <person name="Aidinis V."/>
            <person name="Allen J.E."/>
            <person name="Ambesi-Impiombato A."/>
            <person name="Apweiler R."/>
            <person name="Aturaliya R.N."/>
            <person name="Bailey T.L."/>
            <person name="Bansal M."/>
            <person name="Baxter L."/>
            <person name="Beisel K.W."/>
            <person name="Bersano T."/>
            <person name="Bono H."/>
            <person name="Chalk A.M."/>
            <person name="Chiu K.P."/>
            <person name="Choudhary V."/>
            <person name="Christoffels A."/>
            <person name="Clutterbuck D.R."/>
            <person name="Crowe M.L."/>
            <person name="Dalla E."/>
            <person name="Dalrymple B.P."/>
            <person name="de Bono B."/>
            <person name="Della Gatta G."/>
            <person name="di Bernardo D."/>
            <person name="Down T."/>
            <person name="Engstrom P."/>
            <person name="Fagiolini M."/>
            <person name="Faulkner G."/>
            <person name="Fletcher C.F."/>
            <person name="Fukushima T."/>
            <person name="Furuno M."/>
            <person name="Futaki S."/>
            <person name="Gariboldi M."/>
            <person name="Georgii-Hemming P."/>
            <person name="Gingeras T.R."/>
            <person name="Gojobori T."/>
            <person name="Green R.E."/>
            <person name="Gustincich S."/>
            <person name="Harbers M."/>
            <person name="Hayashi Y."/>
            <person name="Hensch T.K."/>
            <person name="Hirokawa N."/>
            <person name="Hill D."/>
            <person name="Huminiecki L."/>
            <person name="Iacono M."/>
            <person name="Ikeo K."/>
            <person name="Iwama A."/>
            <person name="Ishikawa T."/>
            <person name="Jakt M."/>
            <person name="Kanapin A."/>
            <person name="Katoh M."/>
            <person name="Kawasawa Y."/>
            <person name="Kelso J."/>
            <person name="Kitamura H."/>
            <person name="Kitano H."/>
            <person name="Kollias G."/>
            <person name="Krishnan S.P."/>
            <person name="Kruger A."/>
            <person name="Kummerfeld S.K."/>
            <person name="Kurochkin I.V."/>
            <person name="Lareau L.F."/>
            <person name="Lazarevic D."/>
            <person name="Lipovich L."/>
            <person name="Liu J."/>
            <person name="Liuni S."/>
            <person name="McWilliam S."/>
            <person name="Madan Babu M."/>
            <person name="Madera M."/>
            <person name="Marchionni L."/>
            <person name="Matsuda H."/>
            <person name="Matsuzawa S."/>
            <person name="Miki H."/>
            <person name="Mignone F."/>
            <person name="Miyake S."/>
            <person name="Morris K."/>
            <person name="Mottagui-Tabar S."/>
            <person name="Mulder N."/>
            <person name="Nakano N."/>
            <person name="Nakauchi H."/>
            <person name="Ng P."/>
            <person name="Nilsson R."/>
            <person name="Nishiguchi S."/>
            <person name="Nishikawa S."/>
            <person name="Nori F."/>
            <person name="Ohara O."/>
            <person name="Okazaki Y."/>
            <person name="Orlando V."/>
            <person name="Pang K.C."/>
            <person name="Pavan W.J."/>
            <person name="Pavesi G."/>
            <person name="Pesole G."/>
            <person name="Petrovsky N."/>
            <person name="Piazza S."/>
            <person name="Reed J."/>
            <person name="Reid J.F."/>
            <person name="Ring B.Z."/>
            <person name="Ringwald M."/>
            <person name="Rost B."/>
            <person name="Ruan Y."/>
            <person name="Salzberg S.L."/>
            <person name="Sandelin A."/>
            <person name="Schneider C."/>
            <person name="Schoenbach C."/>
            <person name="Sekiguchi K."/>
            <person name="Semple C.A."/>
            <person name="Seno S."/>
            <person name="Sessa L."/>
            <person name="Sheng Y."/>
            <person name="Shibata Y."/>
            <person name="Shimada H."/>
            <person name="Shimada K."/>
            <person name="Silva D."/>
            <person name="Sinclair B."/>
            <person name="Sperling S."/>
            <person name="Stupka E."/>
            <person name="Sugiura K."/>
            <person name="Sultana R."/>
            <person name="Takenaka Y."/>
            <person name="Taki K."/>
            <person name="Tammoja K."/>
            <person name="Tan S.L."/>
            <person name="Tang S."/>
            <person name="Taylor M.S."/>
            <person name="Tegner J."/>
            <person name="Teichmann S.A."/>
            <person name="Ueda H.R."/>
            <person name="van Nimwegen E."/>
            <person name="Verardo R."/>
            <person name="Wei C.L."/>
            <person name="Yagi K."/>
            <person name="Yamanishi H."/>
            <person name="Zabarovsky E."/>
            <person name="Zhu S."/>
            <person name="Zimmer A."/>
            <person name="Hide W."/>
            <person name="Bult C."/>
            <person name="Grimmond S.M."/>
            <person name="Teasdale R.D."/>
            <person name="Liu E.T."/>
            <person name="Brusic V."/>
            <person name="Quackenbush J."/>
            <person name="Wahlestedt C."/>
            <person name="Mattick J.S."/>
            <person name="Hume D.A."/>
            <person name="Kai C."/>
            <person name="Sasaki D."/>
            <person name="Tomaru Y."/>
            <person name="Fukuda S."/>
            <person name="Kanamori-Katayama M."/>
            <person name="Suzuki M."/>
            <person name="Aoki J."/>
            <person name="Arakawa T."/>
            <person name="Iida J."/>
            <person name="Imamura K."/>
            <person name="Itoh M."/>
            <person name="Kato T."/>
            <person name="Kawaji H."/>
            <person name="Kawagashira N."/>
            <person name="Kawashima T."/>
            <person name="Kojima M."/>
            <person name="Kondo S."/>
            <person name="Konno H."/>
            <person name="Nakano K."/>
            <person name="Ninomiya N."/>
            <person name="Nishio T."/>
            <person name="Okada M."/>
            <person name="Plessy C."/>
            <person name="Shibata K."/>
            <person name="Shiraki T."/>
            <person name="Suzuki S."/>
            <person name="Tagami M."/>
            <person name="Waki K."/>
            <person name="Watahiki A."/>
            <person name="Okamura-Oho Y."/>
            <person name="Suzuki H."/>
            <person name="Kawai J."/>
            <person name="Hayashizaki Y."/>
        </authorList>
    </citation>
    <scope>NUCLEOTIDE SEQUENCE [LARGE SCALE MRNA]</scope>
    <source>
        <strain>C57BL/6J</strain>
        <tissue>Diencephalon</tissue>
        <tissue>Pituitary</tissue>
    </source>
</reference>
<reference key="3">
    <citation type="journal article" date="2004" name="Genome Res.">
        <title>The status, quality, and expansion of the NIH full-length cDNA project: the Mammalian Gene Collection (MGC).</title>
        <authorList>
            <consortium name="The MGC Project Team"/>
        </authorList>
    </citation>
    <scope>NUCLEOTIDE SEQUENCE [LARGE SCALE MRNA]</scope>
    <source>
        <tissue>Eye</tissue>
    </source>
</reference>
<reference key="4">
    <citation type="journal article" date="2009" name="Mol. Cell. Biol.">
        <title>ZNF536, a novel zinc finger protein specifically expressed in the brain, negatively regulates neuron differentiation by repressing retinoic acid-induced gene transcription.</title>
        <authorList>
            <person name="Qin Z."/>
            <person name="Ren F."/>
            <person name="Xu X."/>
            <person name="Ren Y."/>
            <person name="Li H."/>
            <person name="Wang Y."/>
            <person name="Zhai Y."/>
            <person name="Chang Z."/>
        </authorList>
    </citation>
    <scope>FUNCTION</scope>
    <scope>TISSUE SPECIFICITY</scope>
    <scope>DEVELOPMENTAL STAGE</scope>
    <scope>SUBCELLULAR LOCATION</scope>
</reference>
<name>ZN536_MOUSE</name>
<accession>Q8K083</accession>
<accession>Q80U15</accession>